<feature type="chain" id="PRO_0000270202" description="Ubiquitin-conjugating enzyme E2 D4">
    <location>
        <begin position="1"/>
        <end position="147"/>
    </location>
</feature>
<feature type="domain" description="UBC core" evidence="1">
    <location>
        <begin position="1"/>
        <end position="147"/>
    </location>
</feature>
<feature type="active site" description="Glycyl thioester intermediate" evidence="1 2">
    <location>
        <position position="85"/>
    </location>
</feature>
<accession>Q9Y2X8</accession>
<accession>A4D1V0</accession>
<dbReference type="EC" id="2.3.2.23" evidence="3"/>
<dbReference type="EMBL" id="AF125044">
    <property type="protein sequence ID" value="AAD31180.1"/>
    <property type="molecule type" value="mRNA"/>
</dbReference>
<dbReference type="EMBL" id="AK001446">
    <property type="protein sequence ID" value="BAA91697.1"/>
    <property type="molecule type" value="mRNA"/>
</dbReference>
<dbReference type="EMBL" id="CH236951">
    <property type="protein sequence ID" value="EAL24010.1"/>
    <property type="molecule type" value="Genomic_DNA"/>
</dbReference>
<dbReference type="EMBL" id="CH471073">
    <property type="protein sequence ID" value="EAW94182.1"/>
    <property type="molecule type" value="Genomic_DNA"/>
</dbReference>
<dbReference type="EMBL" id="BC004104">
    <property type="protein sequence ID" value="AAH04104.1"/>
    <property type="molecule type" value="mRNA"/>
</dbReference>
<dbReference type="CCDS" id="CCDS5474.1"/>
<dbReference type="RefSeq" id="NP_057067.1">
    <property type="nucleotide sequence ID" value="NM_015983.4"/>
</dbReference>
<dbReference type="SMR" id="Q9Y2X8"/>
<dbReference type="BioGRID" id="119641">
    <property type="interactions" value="123"/>
</dbReference>
<dbReference type="FunCoup" id="Q9Y2X8">
    <property type="interactions" value="436"/>
</dbReference>
<dbReference type="IntAct" id="Q9Y2X8">
    <property type="interactions" value="107"/>
</dbReference>
<dbReference type="MINT" id="Q9Y2X8"/>
<dbReference type="STRING" id="9606.ENSP00000222402"/>
<dbReference type="MoonDB" id="Q9Y2X8">
    <property type="type" value="Predicted"/>
</dbReference>
<dbReference type="iPTMnet" id="Q9Y2X8"/>
<dbReference type="PhosphoSitePlus" id="Q9Y2X8"/>
<dbReference type="SwissPalm" id="Q9Y2X8"/>
<dbReference type="BioMuta" id="UBE2D4"/>
<dbReference type="DMDM" id="74753478"/>
<dbReference type="jPOST" id="Q9Y2X8"/>
<dbReference type="MassIVE" id="Q9Y2X8"/>
<dbReference type="PaxDb" id="9606-ENSP00000222402"/>
<dbReference type="PeptideAtlas" id="Q9Y2X8"/>
<dbReference type="ProteomicsDB" id="85931"/>
<dbReference type="Pumba" id="Q9Y2X8"/>
<dbReference type="Antibodypedia" id="26903">
    <property type="antibodies" value="176 antibodies from 28 providers"/>
</dbReference>
<dbReference type="DNASU" id="51619"/>
<dbReference type="Ensembl" id="ENST00000222402.8">
    <property type="protein sequence ID" value="ENSP00000222402.2"/>
    <property type="gene ID" value="ENSG00000078967.13"/>
</dbReference>
<dbReference type="GeneID" id="51619"/>
<dbReference type="KEGG" id="hsa:51619"/>
<dbReference type="MANE-Select" id="ENST00000222402.8">
    <property type="protein sequence ID" value="ENSP00000222402.2"/>
    <property type="RefSeq nucleotide sequence ID" value="NM_015983.4"/>
    <property type="RefSeq protein sequence ID" value="NP_057067.1"/>
</dbReference>
<dbReference type="UCSC" id="uc003tja.3">
    <property type="organism name" value="human"/>
</dbReference>
<dbReference type="AGR" id="HGNC:21647"/>
<dbReference type="CTD" id="51619"/>
<dbReference type="DisGeNET" id="51619"/>
<dbReference type="GeneCards" id="UBE2D4"/>
<dbReference type="HGNC" id="HGNC:21647">
    <property type="gene designation" value="UBE2D4"/>
</dbReference>
<dbReference type="HPA" id="ENSG00000078967">
    <property type="expression patterns" value="Tissue enhanced (skeletal)"/>
</dbReference>
<dbReference type="neXtProt" id="NX_Q9Y2X8"/>
<dbReference type="OpenTargets" id="ENSG00000078967"/>
<dbReference type="PharmGKB" id="PA134954568"/>
<dbReference type="VEuPathDB" id="HostDB:ENSG00000078967"/>
<dbReference type="eggNOG" id="KOG0417">
    <property type="taxonomic scope" value="Eukaryota"/>
</dbReference>
<dbReference type="GeneTree" id="ENSGT00940000160915"/>
<dbReference type="HOGENOM" id="CLU_030988_13_3_1"/>
<dbReference type="InParanoid" id="Q9Y2X8"/>
<dbReference type="OMA" id="MEMAVTH"/>
<dbReference type="OrthoDB" id="7851174at2759"/>
<dbReference type="PAN-GO" id="Q9Y2X8">
    <property type="GO annotations" value="8 GO annotations based on evolutionary models"/>
</dbReference>
<dbReference type="PhylomeDB" id="Q9Y2X8"/>
<dbReference type="TreeFam" id="TF101108"/>
<dbReference type="BRENDA" id="2.3.2.24">
    <property type="organism ID" value="2681"/>
</dbReference>
<dbReference type="PathwayCommons" id="Q9Y2X8"/>
<dbReference type="Reactome" id="R-HSA-983168">
    <property type="pathway name" value="Antigen processing: Ubiquitination &amp; Proteasome degradation"/>
</dbReference>
<dbReference type="SignaLink" id="Q9Y2X8"/>
<dbReference type="SIGNOR" id="Q9Y2X8"/>
<dbReference type="UniPathway" id="UPA00143"/>
<dbReference type="BioGRID-ORCS" id="51619">
    <property type="hits" value="22 hits in 1149 CRISPR screens"/>
</dbReference>
<dbReference type="GenomeRNAi" id="51619"/>
<dbReference type="Pharos" id="Q9Y2X8">
    <property type="development level" value="Tbio"/>
</dbReference>
<dbReference type="PRO" id="PR:Q9Y2X8"/>
<dbReference type="Proteomes" id="UP000005640">
    <property type="component" value="Chromosome 7"/>
</dbReference>
<dbReference type="RNAct" id="Q9Y2X8">
    <property type="molecule type" value="protein"/>
</dbReference>
<dbReference type="Bgee" id="ENSG00000078967">
    <property type="expression patterns" value="Expressed in pancreatic ductal cell and 201 other cell types or tissues"/>
</dbReference>
<dbReference type="ExpressionAtlas" id="Q9Y2X8">
    <property type="expression patterns" value="baseline and differential"/>
</dbReference>
<dbReference type="GO" id="GO:0005634">
    <property type="term" value="C:nucleus"/>
    <property type="evidence" value="ECO:0000318"/>
    <property type="project" value="GO_Central"/>
</dbReference>
<dbReference type="GO" id="GO:0005524">
    <property type="term" value="F:ATP binding"/>
    <property type="evidence" value="ECO:0007669"/>
    <property type="project" value="UniProtKB-KW"/>
</dbReference>
<dbReference type="GO" id="GO:0061631">
    <property type="term" value="F:ubiquitin conjugating enzyme activity"/>
    <property type="evidence" value="ECO:0000314"/>
    <property type="project" value="MGI"/>
</dbReference>
<dbReference type="GO" id="GO:0004842">
    <property type="term" value="F:ubiquitin-protein transferase activity"/>
    <property type="evidence" value="ECO:0000314"/>
    <property type="project" value="UniProtKB"/>
</dbReference>
<dbReference type="GO" id="GO:0070979">
    <property type="term" value="P:protein K11-linked ubiquitination"/>
    <property type="evidence" value="ECO:0000314"/>
    <property type="project" value="UniProtKB"/>
</dbReference>
<dbReference type="GO" id="GO:0044314">
    <property type="term" value="P:protein K27-linked ubiquitination"/>
    <property type="evidence" value="ECO:0000314"/>
    <property type="project" value="UniProtKB"/>
</dbReference>
<dbReference type="GO" id="GO:0035519">
    <property type="term" value="P:protein K29-linked ubiquitination"/>
    <property type="evidence" value="ECO:0000314"/>
    <property type="project" value="UniProtKB"/>
</dbReference>
<dbReference type="GO" id="GO:0070936">
    <property type="term" value="P:protein K48-linked ubiquitination"/>
    <property type="evidence" value="ECO:0000314"/>
    <property type="project" value="UniProtKB"/>
</dbReference>
<dbReference type="GO" id="GO:0085020">
    <property type="term" value="P:protein K6-linked ubiquitination"/>
    <property type="evidence" value="ECO:0000314"/>
    <property type="project" value="UniProtKB"/>
</dbReference>
<dbReference type="GO" id="GO:0070534">
    <property type="term" value="P:protein K63-linked ubiquitination"/>
    <property type="evidence" value="ECO:0000314"/>
    <property type="project" value="UniProtKB"/>
</dbReference>
<dbReference type="GO" id="GO:0016567">
    <property type="term" value="P:protein ubiquitination"/>
    <property type="evidence" value="ECO:0000314"/>
    <property type="project" value="MGI"/>
</dbReference>
<dbReference type="GO" id="GO:0006511">
    <property type="term" value="P:ubiquitin-dependent protein catabolic process"/>
    <property type="evidence" value="ECO:0000318"/>
    <property type="project" value="GO_Central"/>
</dbReference>
<dbReference type="CDD" id="cd23792">
    <property type="entry name" value="UBCc_UBE2D"/>
    <property type="match status" value="1"/>
</dbReference>
<dbReference type="FunFam" id="3.10.110.10:FF:000101">
    <property type="entry name" value="Ubiquitin-conjugating enzyme E2 D2"/>
    <property type="match status" value="1"/>
</dbReference>
<dbReference type="Gene3D" id="3.10.110.10">
    <property type="entry name" value="Ubiquitin Conjugating Enzyme"/>
    <property type="match status" value="1"/>
</dbReference>
<dbReference type="InterPro" id="IPR000608">
    <property type="entry name" value="UBQ-conjugat_E2_core"/>
</dbReference>
<dbReference type="InterPro" id="IPR023313">
    <property type="entry name" value="UBQ-conjugating_AS"/>
</dbReference>
<dbReference type="InterPro" id="IPR016135">
    <property type="entry name" value="UBQ-conjugating_enzyme/RWD"/>
</dbReference>
<dbReference type="PANTHER" id="PTHR24068">
    <property type="entry name" value="UBIQUITIN-CONJUGATING ENZYME E2"/>
    <property type="match status" value="1"/>
</dbReference>
<dbReference type="Pfam" id="PF00179">
    <property type="entry name" value="UQ_con"/>
    <property type="match status" value="1"/>
</dbReference>
<dbReference type="SMART" id="SM00212">
    <property type="entry name" value="UBCc"/>
    <property type="match status" value="1"/>
</dbReference>
<dbReference type="SUPFAM" id="SSF54495">
    <property type="entry name" value="UBC-like"/>
    <property type="match status" value="1"/>
</dbReference>
<dbReference type="PROSITE" id="PS00183">
    <property type="entry name" value="UBC_1"/>
    <property type="match status" value="1"/>
</dbReference>
<dbReference type="PROSITE" id="PS50127">
    <property type="entry name" value="UBC_2"/>
    <property type="match status" value="1"/>
</dbReference>
<sequence length="147" mass="16649">MALKRIQKELTDLQRDPPAQCSAGPVGDDLFHWQATIMGPNDSPYQGGVFFLTIHFPTDYPFKPPKVAFTTKIYHPNINSNGSICLDILRSQWSPALTVSKVLLSICSLLCDPNPDDPLVPEIAHTYKADREKYNRLAREWTQKYAM</sequence>
<proteinExistence type="evidence at protein level"/>
<protein>
    <recommendedName>
        <fullName>Ubiquitin-conjugating enzyme E2 D4</fullName>
        <ecNumber evidence="3">2.3.2.23</ecNumber>
    </recommendedName>
    <alternativeName>
        <fullName>E2 ubiquitin-conjugating enzyme D4</fullName>
    </alternativeName>
    <alternativeName>
        <fullName>HBUCE1</fullName>
    </alternativeName>
    <alternativeName>
        <fullName>Ubiquitin carrier protein D4</fullName>
    </alternativeName>
    <alternativeName>
        <fullName>Ubiquitin-protein ligase D4</fullName>
    </alternativeName>
</protein>
<name>UB2D4_HUMAN</name>
<gene>
    <name type="primary">UBE2D4</name>
    <name type="synonym">UBCH5D</name>
</gene>
<organism>
    <name type="scientific">Homo sapiens</name>
    <name type="common">Human</name>
    <dbReference type="NCBI Taxonomy" id="9606"/>
    <lineage>
        <taxon>Eukaryota</taxon>
        <taxon>Metazoa</taxon>
        <taxon>Chordata</taxon>
        <taxon>Craniata</taxon>
        <taxon>Vertebrata</taxon>
        <taxon>Euteleostomi</taxon>
        <taxon>Mammalia</taxon>
        <taxon>Eutheria</taxon>
        <taxon>Euarchontoglires</taxon>
        <taxon>Primates</taxon>
        <taxon>Haplorrhini</taxon>
        <taxon>Catarrhini</taxon>
        <taxon>Hominidae</taxon>
        <taxon>Homo</taxon>
    </lineage>
</organism>
<reference key="1">
    <citation type="submission" date="1999-01" db="EMBL/GenBank/DDBJ databases">
        <title>Molecular cloning and screening of two ubiquitin conjugation enzymes.</title>
        <authorList>
            <person name="Li G."/>
            <person name="Jin J."/>
            <person name="Hu S."/>
            <person name="Li W."/>
            <person name="Yuan J."/>
            <person name="Qiang B."/>
        </authorList>
    </citation>
    <scope>NUCLEOTIDE SEQUENCE [MRNA]</scope>
    <source>
        <tissue>Brain</tissue>
    </source>
</reference>
<reference key="2">
    <citation type="journal article" date="2004" name="Nat. Genet.">
        <title>Complete sequencing and characterization of 21,243 full-length human cDNAs.</title>
        <authorList>
            <person name="Ota T."/>
            <person name="Suzuki Y."/>
            <person name="Nishikawa T."/>
            <person name="Otsuki T."/>
            <person name="Sugiyama T."/>
            <person name="Irie R."/>
            <person name="Wakamatsu A."/>
            <person name="Hayashi K."/>
            <person name="Sato H."/>
            <person name="Nagai K."/>
            <person name="Kimura K."/>
            <person name="Makita H."/>
            <person name="Sekine M."/>
            <person name="Obayashi M."/>
            <person name="Nishi T."/>
            <person name="Shibahara T."/>
            <person name="Tanaka T."/>
            <person name="Ishii S."/>
            <person name="Yamamoto J."/>
            <person name="Saito K."/>
            <person name="Kawai Y."/>
            <person name="Isono Y."/>
            <person name="Nakamura Y."/>
            <person name="Nagahari K."/>
            <person name="Murakami K."/>
            <person name="Yasuda T."/>
            <person name="Iwayanagi T."/>
            <person name="Wagatsuma M."/>
            <person name="Shiratori A."/>
            <person name="Sudo H."/>
            <person name="Hosoiri T."/>
            <person name="Kaku Y."/>
            <person name="Kodaira H."/>
            <person name="Kondo H."/>
            <person name="Sugawara M."/>
            <person name="Takahashi M."/>
            <person name="Kanda K."/>
            <person name="Yokoi T."/>
            <person name="Furuya T."/>
            <person name="Kikkawa E."/>
            <person name="Omura Y."/>
            <person name="Abe K."/>
            <person name="Kamihara K."/>
            <person name="Katsuta N."/>
            <person name="Sato K."/>
            <person name="Tanikawa M."/>
            <person name="Yamazaki M."/>
            <person name="Ninomiya K."/>
            <person name="Ishibashi T."/>
            <person name="Yamashita H."/>
            <person name="Murakawa K."/>
            <person name="Fujimori K."/>
            <person name="Tanai H."/>
            <person name="Kimata M."/>
            <person name="Watanabe M."/>
            <person name="Hiraoka S."/>
            <person name="Chiba Y."/>
            <person name="Ishida S."/>
            <person name="Ono Y."/>
            <person name="Takiguchi S."/>
            <person name="Watanabe S."/>
            <person name="Yosida M."/>
            <person name="Hotuta T."/>
            <person name="Kusano J."/>
            <person name="Kanehori K."/>
            <person name="Takahashi-Fujii A."/>
            <person name="Hara H."/>
            <person name="Tanase T.-O."/>
            <person name="Nomura Y."/>
            <person name="Togiya S."/>
            <person name="Komai F."/>
            <person name="Hara R."/>
            <person name="Takeuchi K."/>
            <person name="Arita M."/>
            <person name="Imose N."/>
            <person name="Musashino K."/>
            <person name="Yuuki H."/>
            <person name="Oshima A."/>
            <person name="Sasaki N."/>
            <person name="Aotsuka S."/>
            <person name="Yoshikawa Y."/>
            <person name="Matsunawa H."/>
            <person name="Ichihara T."/>
            <person name="Shiohata N."/>
            <person name="Sano S."/>
            <person name="Moriya S."/>
            <person name="Momiyama H."/>
            <person name="Satoh N."/>
            <person name="Takami S."/>
            <person name="Terashima Y."/>
            <person name="Suzuki O."/>
            <person name="Nakagawa S."/>
            <person name="Senoh A."/>
            <person name="Mizoguchi H."/>
            <person name="Goto Y."/>
            <person name="Shimizu F."/>
            <person name="Wakebe H."/>
            <person name="Hishigaki H."/>
            <person name="Watanabe T."/>
            <person name="Sugiyama A."/>
            <person name="Takemoto M."/>
            <person name="Kawakami B."/>
            <person name="Yamazaki M."/>
            <person name="Watanabe K."/>
            <person name="Kumagai A."/>
            <person name="Itakura S."/>
            <person name="Fukuzumi Y."/>
            <person name="Fujimori Y."/>
            <person name="Komiyama M."/>
            <person name="Tashiro H."/>
            <person name="Tanigami A."/>
            <person name="Fujiwara T."/>
            <person name="Ono T."/>
            <person name="Yamada K."/>
            <person name="Fujii Y."/>
            <person name="Ozaki K."/>
            <person name="Hirao M."/>
            <person name="Ohmori Y."/>
            <person name="Kawabata A."/>
            <person name="Hikiji T."/>
            <person name="Kobatake N."/>
            <person name="Inagaki H."/>
            <person name="Ikema Y."/>
            <person name="Okamoto S."/>
            <person name="Okitani R."/>
            <person name="Kawakami T."/>
            <person name="Noguchi S."/>
            <person name="Itoh T."/>
            <person name="Shigeta K."/>
            <person name="Senba T."/>
            <person name="Matsumura K."/>
            <person name="Nakajima Y."/>
            <person name="Mizuno T."/>
            <person name="Morinaga M."/>
            <person name="Sasaki M."/>
            <person name="Togashi T."/>
            <person name="Oyama M."/>
            <person name="Hata H."/>
            <person name="Watanabe M."/>
            <person name="Komatsu T."/>
            <person name="Mizushima-Sugano J."/>
            <person name="Satoh T."/>
            <person name="Shirai Y."/>
            <person name="Takahashi Y."/>
            <person name="Nakagawa K."/>
            <person name="Okumura K."/>
            <person name="Nagase T."/>
            <person name="Nomura N."/>
            <person name="Kikuchi H."/>
            <person name="Masuho Y."/>
            <person name="Yamashita R."/>
            <person name="Nakai K."/>
            <person name="Yada T."/>
            <person name="Nakamura Y."/>
            <person name="Ohara O."/>
            <person name="Isogai T."/>
            <person name="Sugano S."/>
        </authorList>
    </citation>
    <scope>NUCLEOTIDE SEQUENCE [LARGE SCALE MRNA]</scope>
</reference>
<reference key="3">
    <citation type="journal article" date="2003" name="Science">
        <title>Human chromosome 7: DNA sequence and biology.</title>
        <authorList>
            <person name="Scherer S.W."/>
            <person name="Cheung J."/>
            <person name="MacDonald J.R."/>
            <person name="Osborne L.R."/>
            <person name="Nakabayashi K."/>
            <person name="Herbrick J.-A."/>
            <person name="Carson A.R."/>
            <person name="Parker-Katiraee L."/>
            <person name="Skaug J."/>
            <person name="Khaja R."/>
            <person name="Zhang J."/>
            <person name="Hudek A.K."/>
            <person name="Li M."/>
            <person name="Haddad M."/>
            <person name="Duggan G.E."/>
            <person name="Fernandez B.A."/>
            <person name="Kanematsu E."/>
            <person name="Gentles S."/>
            <person name="Christopoulos C.C."/>
            <person name="Choufani S."/>
            <person name="Kwasnicka D."/>
            <person name="Zheng X.H."/>
            <person name="Lai Z."/>
            <person name="Nusskern D.R."/>
            <person name="Zhang Q."/>
            <person name="Gu Z."/>
            <person name="Lu F."/>
            <person name="Zeesman S."/>
            <person name="Nowaczyk M.J."/>
            <person name="Teshima I."/>
            <person name="Chitayat D."/>
            <person name="Shuman C."/>
            <person name="Weksberg R."/>
            <person name="Zackai E.H."/>
            <person name="Grebe T.A."/>
            <person name="Cox S.R."/>
            <person name="Kirkpatrick S.J."/>
            <person name="Rahman N."/>
            <person name="Friedman J.M."/>
            <person name="Heng H.H.Q."/>
            <person name="Pelicci P.G."/>
            <person name="Lo-Coco F."/>
            <person name="Belloni E."/>
            <person name="Shaffer L.G."/>
            <person name="Pober B."/>
            <person name="Morton C.C."/>
            <person name="Gusella J.F."/>
            <person name="Bruns G.A.P."/>
            <person name="Korf B.R."/>
            <person name="Quade B.J."/>
            <person name="Ligon A.H."/>
            <person name="Ferguson H."/>
            <person name="Higgins A.W."/>
            <person name="Leach N.T."/>
            <person name="Herrick S.R."/>
            <person name="Lemyre E."/>
            <person name="Farra C.G."/>
            <person name="Kim H.-G."/>
            <person name="Summers A.M."/>
            <person name="Gripp K.W."/>
            <person name="Roberts W."/>
            <person name="Szatmari P."/>
            <person name="Winsor E.J.T."/>
            <person name="Grzeschik K.-H."/>
            <person name="Teebi A."/>
            <person name="Minassian B.A."/>
            <person name="Kere J."/>
            <person name="Armengol L."/>
            <person name="Pujana M.A."/>
            <person name="Estivill X."/>
            <person name="Wilson M.D."/>
            <person name="Koop B.F."/>
            <person name="Tosi S."/>
            <person name="Moore G.E."/>
            <person name="Boright A.P."/>
            <person name="Zlotorynski E."/>
            <person name="Kerem B."/>
            <person name="Kroisel P.M."/>
            <person name="Petek E."/>
            <person name="Oscier D.G."/>
            <person name="Mould S.J."/>
            <person name="Doehner H."/>
            <person name="Doehner K."/>
            <person name="Rommens J.M."/>
            <person name="Vincent J.B."/>
            <person name="Venter J.C."/>
            <person name="Li P.W."/>
            <person name="Mural R.J."/>
            <person name="Adams M.D."/>
            <person name="Tsui L.-C."/>
        </authorList>
    </citation>
    <scope>NUCLEOTIDE SEQUENCE [LARGE SCALE GENOMIC DNA]</scope>
</reference>
<reference key="4">
    <citation type="submission" date="2005-07" db="EMBL/GenBank/DDBJ databases">
        <authorList>
            <person name="Mural R.J."/>
            <person name="Istrail S."/>
            <person name="Sutton G.G."/>
            <person name="Florea L."/>
            <person name="Halpern A.L."/>
            <person name="Mobarry C.M."/>
            <person name="Lippert R."/>
            <person name="Walenz B."/>
            <person name="Shatkay H."/>
            <person name="Dew I."/>
            <person name="Miller J.R."/>
            <person name="Flanigan M.J."/>
            <person name="Edwards N.J."/>
            <person name="Bolanos R."/>
            <person name="Fasulo D."/>
            <person name="Halldorsson B.V."/>
            <person name="Hannenhalli S."/>
            <person name="Turner R."/>
            <person name="Yooseph S."/>
            <person name="Lu F."/>
            <person name="Nusskern D.R."/>
            <person name="Shue B.C."/>
            <person name="Zheng X.H."/>
            <person name="Zhong F."/>
            <person name="Delcher A.L."/>
            <person name="Huson D.H."/>
            <person name="Kravitz S.A."/>
            <person name="Mouchard L."/>
            <person name="Reinert K."/>
            <person name="Remington K.A."/>
            <person name="Clark A.G."/>
            <person name="Waterman M.S."/>
            <person name="Eichler E.E."/>
            <person name="Adams M.D."/>
            <person name="Hunkapiller M.W."/>
            <person name="Myers E.W."/>
            <person name="Venter J.C."/>
        </authorList>
    </citation>
    <scope>NUCLEOTIDE SEQUENCE [LARGE SCALE GENOMIC DNA]</scope>
</reference>
<reference key="5">
    <citation type="journal article" date="2004" name="Genome Res.">
        <title>The status, quality, and expansion of the NIH full-length cDNA project: the Mammalian Gene Collection (MGC).</title>
        <authorList>
            <consortium name="The MGC Project Team"/>
        </authorList>
    </citation>
    <scope>NUCLEOTIDE SEQUENCE [LARGE SCALE MRNA]</scope>
    <source>
        <tissue>Ovary</tissue>
    </source>
</reference>
<reference key="6">
    <citation type="journal article" date="2010" name="J. Biol. Chem.">
        <title>The E2 ubiquitin-conjugating enzymes direct polyubiquitination to preferred lysines.</title>
        <authorList>
            <person name="David Y."/>
            <person name="Ziv T."/>
            <person name="Admon A."/>
            <person name="Navon A."/>
        </authorList>
    </citation>
    <scope>FUNCTION</scope>
    <scope>CATALYTIC ACTIVITY</scope>
</reference>
<keyword id="KW-0067">ATP-binding</keyword>
<keyword id="KW-0547">Nucleotide-binding</keyword>
<keyword id="KW-1267">Proteomics identification</keyword>
<keyword id="KW-1185">Reference proteome</keyword>
<keyword id="KW-0808">Transferase</keyword>
<keyword id="KW-0833">Ubl conjugation pathway</keyword>
<comment type="function">
    <text evidence="3">Accepts ubiquitin from the E1 complex and catalyzes its covalent attachment to other proteins. In vitro able to promote polyubiquitination using all 7 ubiquitin Lys residues, but may prefer 'Lys-11' and 'Lys-48'-linked polyubiquitination.</text>
</comment>
<comment type="catalytic activity">
    <reaction evidence="1 2 3">
        <text>S-ubiquitinyl-[E1 ubiquitin-activating enzyme]-L-cysteine + [E2 ubiquitin-conjugating enzyme]-L-cysteine = [E1 ubiquitin-activating enzyme]-L-cysteine + S-ubiquitinyl-[E2 ubiquitin-conjugating enzyme]-L-cysteine.</text>
        <dbReference type="EC" id="2.3.2.23"/>
    </reaction>
</comment>
<comment type="pathway">
    <text evidence="1">Protein modification; protein ubiquitination.</text>
</comment>
<comment type="interaction">
    <interactant intactId="EBI-745527">
        <id>Q9Y2X8</id>
    </interactant>
    <interactant intactId="EBI-724310">
        <id>Q15038</id>
        <label>DAZAP2</label>
    </interactant>
    <organismsDiffer>false</organismsDiffer>
    <experiments>3</experiments>
</comment>
<comment type="interaction">
    <interactant intactId="EBI-745527">
        <id>Q9Y2X8</id>
    </interactant>
    <interactant intactId="EBI-740376">
        <id>Q86UW9</id>
        <label>DTX2</label>
    </interactant>
    <organismsDiffer>false</organismsDiffer>
    <experiments>13</experiments>
</comment>
<comment type="interaction">
    <interactant intactId="EBI-745527">
        <id>Q9Y2X8</id>
    </interactant>
    <interactant intactId="EBI-2340258">
        <id>Q8N9I9</id>
        <label>DTX3</label>
    </interactant>
    <organismsDiffer>false</organismsDiffer>
    <experiments>4</experiments>
</comment>
<comment type="interaction">
    <interactant intactId="EBI-745527">
        <id>Q9Y2X8</id>
    </interactant>
    <interactant intactId="EBI-356942">
        <id>P62879</id>
        <label>GNB2</label>
    </interactant>
    <organismsDiffer>false</organismsDiffer>
    <experiments>3</experiments>
</comment>
<comment type="interaction">
    <interactant intactId="EBI-745527">
        <id>Q9Y2X8</id>
    </interactant>
    <interactant intactId="EBI-466029">
        <id>P42858</id>
        <label>HTT</label>
    </interactant>
    <organismsDiffer>false</organismsDiffer>
    <experiments>3</experiments>
</comment>
<comment type="interaction">
    <interactant intactId="EBI-745527">
        <id>Q9Y2X8</id>
    </interactant>
    <interactant intactId="EBI-81279">
        <id>Q9Y6K9</id>
        <label>IKBKG</label>
    </interactant>
    <organismsDiffer>false</organismsDiffer>
    <experiments>3</experiments>
</comment>
<comment type="interaction">
    <interactant intactId="EBI-745527">
        <id>Q9Y2X8</id>
    </interactant>
    <interactant intactId="EBI-6509505">
        <id>Q0VD86</id>
        <label>INCA1</label>
    </interactant>
    <organismsDiffer>false</organismsDiffer>
    <experiments>3</experiments>
</comment>
<comment type="interaction">
    <interactant intactId="EBI-745527">
        <id>Q9Y2X8</id>
    </interactant>
    <interactant intactId="EBI-739832">
        <id>Q8TBB1</id>
        <label>LNX1</label>
    </interactant>
    <organismsDiffer>false</organismsDiffer>
    <experiments>5</experiments>
</comment>
<comment type="interaction">
    <interactant intactId="EBI-745527">
        <id>Q9Y2X8</id>
    </interactant>
    <interactant intactId="EBI-2340316">
        <id>O15344</id>
        <label>MID1</label>
    </interactant>
    <organismsDiffer>false</organismsDiffer>
    <experiments>4</experiments>
</comment>
<comment type="interaction">
    <interactant intactId="EBI-745527">
        <id>Q9Y2X8</id>
    </interactant>
    <interactant intactId="EBI-10172526">
        <id>Q9UJV3-2</id>
        <label>MID2</label>
    </interactant>
    <organismsDiffer>false</organismsDiffer>
    <experiments>6</experiments>
</comment>
<comment type="interaction">
    <interactant intactId="EBI-745527">
        <id>Q9Y2X8</id>
    </interactant>
    <interactant intactId="EBI-373524">
        <id>Q9UHC7</id>
        <label>MKRN1</label>
    </interactant>
    <organismsDiffer>false</organismsDiffer>
    <experiments>3</experiments>
</comment>
<comment type="interaction">
    <interactant intactId="EBI-745527">
        <id>Q9Y2X8</id>
    </interactant>
    <interactant intactId="EBI-2341005">
        <id>Q9H000</id>
        <label>MKRN2</label>
    </interactant>
    <organismsDiffer>false</organismsDiffer>
    <experiments>6</experiments>
</comment>
<comment type="interaction">
    <interactant intactId="EBI-745527">
        <id>Q9Y2X8</id>
    </interactant>
    <interactant intactId="EBI-1058491">
        <id>Q96FW1</id>
        <label>OTUB1</label>
    </interactant>
    <organismsDiffer>false</organismsDiffer>
    <experiments>12</experiments>
</comment>
<comment type="interaction">
    <interactant intactId="EBI-745527">
        <id>Q9Y2X8</id>
    </interactant>
    <interactant intactId="EBI-4307517">
        <id>Q9BWX1</id>
        <label>PHF7</label>
    </interactant>
    <organismsDiffer>false</organismsDiffer>
    <experiments>3</experiments>
</comment>
<comment type="interaction">
    <interactant intactId="EBI-745527">
        <id>Q9Y2X8</id>
    </interactant>
    <interactant intactId="EBI-395189">
        <id>P19388</id>
        <label>POLR2E</label>
    </interactant>
    <organismsDiffer>false</organismsDiffer>
    <experiments>3</experiments>
</comment>
<comment type="interaction">
    <interactant intactId="EBI-745527">
        <id>Q9Y2X8</id>
    </interactant>
    <interactant intactId="EBI-10829018">
        <id>Q04864-2</id>
        <label>REL</label>
    </interactant>
    <organismsDiffer>false</organismsDiffer>
    <experiments>3</experiments>
</comment>
<comment type="interaction">
    <interactant intactId="EBI-745527">
        <id>Q9Y2X8</id>
    </interactant>
    <interactant intactId="EBI-752313">
        <id>Q06587</id>
        <label>RING1</label>
    </interactant>
    <organismsDiffer>false</organismsDiffer>
    <experiments>4</experiments>
</comment>
<comment type="interaction">
    <interactant intactId="EBI-745527">
        <id>Q9Y2X8</id>
    </interactant>
    <interactant intactId="EBI-714023">
        <id>Q8N5U6</id>
        <label>RNF10</label>
    </interactant>
    <organismsDiffer>false</organismsDiffer>
    <experiments>3</experiments>
</comment>
<comment type="interaction">
    <interactant intactId="EBI-745527">
        <id>Q9Y2X8</id>
    </interactant>
    <interactant intactId="EBI-396669">
        <id>Q9Y3C5</id>
        <label>RNF11</label>
    </interactant>
    <organismsDiffer>false</organismsDiffer>
    <experiments>10</experiments>
</comment>
<comment type="interaction">
    <interactant intactId="EBI-745527">
        <id>Q9Y2X8</id>
    </interactant>
    <interactant intactId="EBI-2129242">
        <id>Q9Y4L5</id>
        <label>RNF115</label>
    </interactant>
    <organismsDiffer>false</organismsDiffer>
    <experiments>12</experiments>
</comment>
<comment type="interaction">
    <interactant intactId="EBI-745527">
        <id>Q9Y2X8</id>
    </interactant>
    <interactant intactId="EBI-357322">
        <id>Q9BV68</id>
        <label>RNF126</label>
    </interactant>
    <organismsDiffer>false</organismsDiffer>
    <experiments>3</experiments>
</comment>
<comment type="interaction">
    <interactant intactId="EBI-745527">
        <id>Q9Y2X8</id>
    </interactant>
    <interactant intactId="EBI-2130308">
        <id>Q9UBS8</id>
        <label>RNF14</label>
    </interactant>
    <organismsDiffer>false</organismsDiffer>
    <experiments>5</experiments>
</comment>
<comment type="interaction">
    <interactant intactId="EBI-745527">
        <id>Q9Y2X8</id>
    </interactant>
    <interactant intactId="EBI-2130320">
        <id>Q96A37</id>
        <label>RNF166</label>
    </interactant>
    <organismsDiffer>false</organismsDiffer>
    <experiments>4</experiments>
</comment>
<comment type="interaction">
    <interactant intactId="EBI-745527">
        <id>Q9Y2X8</id>
    </interactant>
    <interactant intactId="EBI-2129136">
        <id>Q9P0P0</id>
        <label>RNF181</label>
    </interactant>
    <organismsDiffer>false</organismsDiffer>
    <experiments>4</experiments>
</comment>
<comment type="interaction">
    <interactant intactId="EBI-745527">
        <id>Q9Y2X8</id>
    </interactant>
    <interactant intactId="EBI-2340249">
        <id>Q96GF1</id>
        <label>RNF185</label>
    </interactant>
    <organismsDiffer>false</organismsDiffer>
    <experiments>4</experiments>
</comment>
<comment type="interaction">
    <interactant intactId="EBI-745527">
        <id>Q9Y2X8</id>
    </interactant>
    <interactant intactId="EBI-722416">
        <id>Q99496</id>
        <label>RNF2</label>
    </interactant>
    <organismsDiffer>false</organismsDiffer>
    <experiments>4</experiments>
</comment>
<comment type="interaction">
    <interactant intactId="EBI-745527">
        <id>Q9Y2X8</id>
    </interactant>
    <interactant intactId="EBI-2129220">
        <id>Q96BH1</id>
        <label>RNF25</label>
    </interactant>
    <organismsDiffer>false</organismsDiffer>
    <experiments>6</experiments>
</comment>
<comment type="interaction">
    <interactant intactId="EBI-745527">
        <id>Q9Y2X8</id>
    </interactant>
    <interactant intactId="EBI-348482">
        <id>Q99942</id>
        <label>RNF5</label>
    </interactant>
    <organismsDiffer>false</organismsDiffer>
    <experiments>7</experiments>
</comment>
<comment type="interaction">
    <interactant intactId="EBI-745527">
        <id>Q9Y2X8</id>
    </interactant>
    <interactant intactId="EBI-739510">
        <id>Q9HCM9</id>
        <label>TRIM39</label>
    </interactant>
    <organismsDiffer>false</organismsDiffer>
    <experiments>5</experiments>
</comment>
<comment type="interaction">
    <interactant intactId="EBI-745527">
        <id>Q9Y2X8</id>
    </interactant>
    <interactant intactId="EBI-11523450">
        <id>Q9HCM9-2</id>
        <label>TRIM39</label>
    </interactant>
    <organismsDiffer>false</organismsDiffer>
    <experiments>7</experiments>
</comment>
<comment type="interaction">
    <interactant intactId="EBI-745527">
        <id>Q9Y2X8</id>
    </interactant>
    <interactant intactId="EBI-9867283">
        <id>Q86XT4</id>
        <label>TRIM50</label>
    </interactant>
    <organismsDiffer>false</organismsDiffer>
    <experiments>3</experiments>
</comment>
<comment type="interaction">
    <interactant intactId="EBI-745527">
        <id>Q9Y2X8</id>
    </interactant>
    <interactant intactId="EBI-2130429">
        <id>Q9BYV2</id>
        <label>TRIM54</label>
    </interactant>
    <organismsDiffer>false</organismsDiffer>
    <experiments>3</experiments>
</comment>
<comment type="interaction">
    <interactant intactId="EBI-745527">
        <id>Q9Y2X8</id>
    </interactant>
    <interactant intactId="EBI-6929619">
        <id>Q9BVG3</id>
        <label>TRIM62</label>
    </interactant>
    <organismsDiffer>false</organismsDiffer>
    <experiments>3</experiments>
</comment>
<comment type="interaction">
    <interactant intactId="EBI-745527">
        <id>Q9Y2X8</id>
    </interactant>
    <interactant intactId="EBI-2340370">
        <id>Q9BZR9</id>
        <label>TRIM8</label>
    </interactant>
    <organismsDiffer>false</organismsDiffer>
    <experiments>4</experiments>
</comment>
<comment type="interaction">
    <interactant intactId="EBI-745527">
        <id>Q9Y2X8</id>
    </interactant>
    <interactant intactId="EBI-745871">
        <id>Q9HAC8</id>
        <label>UBTD1</label>
    </interactant>
    <organismsDiffer>false</organismsDiffer>
    <experiments>9</experiments>
</comment>
<comment type="interaction">
    <interactant intactId="EBI-745527">
        <id>Q9Y2X8</id>
    </interactant>
    <interactant intactId="EBI-12867288">
        <id>Q8WUN7</id>
        <label>UBTD2</label>
    </interactant>
    <organismsDiffer>false</organismsDiffer>
    <experiments>3</experiments>
</comment>
<comment type="interaction">
    <interactant intactId="EBI-745527">
        <id>Q9Y2X8</id>
    </interactant>
    <interactant intactId="EBI-2129250">
        <id>Q8ND25</id>
        <label>ZNRF1</label>
    </interactant>
    <organismsDiffer>false</organismsDiffer>
    <experiments>6</experiments>
</comment>
<comment type="similarity">
    <text evidence="1">Belongs to the ubiquitin-conjugating enzyme family.</text>
</comment>
<evidence type="ECO:0000255" key="1">
    <source>
        <dbReference type="PROSITE-ProRule" id="PRU00388"/>
    </source>
</evidence>
<evidence type="ECO:0000255" key="2">
    <source>
        <dbReference type="PROSITE-ProRule" id="PRU10133"/>
    </source>
</evidence>
<evidence type="ECO:0000269" key="3">
    <source>
    </source>
</evidence>